<protein>
    <recommendedName>
        <fullName evidence="1">Glycine dehydrogenase (decarboxylating)</fullName>
        <ecNumber evidence="1">1.4.4.2</ecNumber>
    </recommendedName>
    <alternativeName>
        <fullName evidence="1">Glycine cleavage system P-protein</fullName>
    </alternativeName>
    <alternativeName>
        <fullName evidence="1">Glycine decarboxylase</fullName>
    </alternativeName>
    <alternativeName>
        <fullName evidence="1">Glycine dehydrogenase (aminomethyl-transferring)</fullName>
    </alternativeName>
</protein>
<organism>
    <name type="scientific">Burkholderia ambifaria (strain ATCC BAA-244 / DSM 16087 / CCUG 44356 / LMG 19182 / AMMD)</name>
    <name type="common">Burkholderia cepacia (strain AMMD)</name>
    <dbReference type="NCBI Taxonomy" id="339670"/>
    <lineage>
        <taxon>Bacteria</taxon>
        <taxon>Pseudomonadati</taxon>
        <taxon>Pseudomonadota</taxon>
        <taxon>Betaproteobacteria</taxon>
        <taxon>Burkholderiales</taxon>
        <taxon>Burkholderiaceae</taxon>
        <taxon>Burkholderia</taxon>
        <taxon>Burkholderia cepacia complex</taxon>
    </lineage>
</organism>
<sequence>MKLEHPDRLMNRTPLSLAALETHDAFAERHIGPDAASQQAMLDTLGFASRAALIDAVIPASIRRAETLPLGPFAQPKSEAEALAALRALADKNQVFRSYIGQGYHDTHTPAVILRNVLENPAWYTAYTPYQPEISQGRLEALLNFQQMVADLTGLAISNASLLDEATAAAEAMTLLQRTGKPASNVFYVADDVLPQTLEVIRTRALPVGIEVKTGPAADAAQANAFGVLLQYPGVNGDVRDYRALTEAIHAAGGHVVVAADLLALTVLTPPGEWGADVAVGNTQRFGVPMGFGGPHAAYLAVRDEFKRQMPGRLVGVTVDAQGKPALRLALQTREQHIRREKATSNVCTAQALLAIMASMYAVYHGPHGLKTIALRVNRIAALFAAGVKQLGFAPINDTFFDTLTIDTGARTAQVHEFAKARRINLRRVSDTQVGVSFDETTTRDDLAALLAVFAQAAGGTAPSVDALDAGLAGVAALPAGLERTSAYLTHHVFNRHHSETEMLRYLRSLSDKDLALDRSMIPLGSCTMKLNATSEMLPVTWPEFGRIHPFAPAEQTVGYREMIDQLEQMLVAATGYAAVSLQPNAGSQGEYAGLLIIHAYHASRGEAHRDVCLIPASAHGTNPASAHMAGMKVVVVACDAQGNVDIADLKAKAEQHANDLAAIMITYPSTHGVFEQNVREICEIVHAHGGQVYVDGANMNAMVGLTAPGQFGGDVSHLNLHKTFCIPHGGGGPGVGPVAVGPHLAKFLPNQRSTGYTREENGIGAVSAAPYGSASILPISWMYIAMMGAKNLTAATETAILNANYIAKRLAPHYPVLYSGPGGLVAHECILDLRPIKETSGISVDDVAKRLMDYGFHAPTMSFPVPGTLMVEPTESESQEELDRFIAAMIAIREEIRAVEEGRADREDNPLRHAPHTAAVVTANEWPHAYSREQAAYPVASLGTNKYWPPVGRADNAYGDRNLFCSCVPMSDYA</sequence>
<gene>
    <name evidence="1" type="primary">gcvP</name>
    <name type="ordered locus">Bamb_0131</name>
</gene>
<feature type="chain" id="PRO_1000045570" description="Glycine dehydrogenase (decarboxylating)">
    <location>
        <begin position="1"/>
        <end position="975"/>
    </location>
</feature>
<feature type="modified residue" description="N6-(pyridoxal phosphate)lysine" evidence="1">
    <location>
        <position position="723"/>
    </location>
</feature>
<keyword id="KW-0560">Oxidoreductase</keyword>
<keyword id="KW-0663">Pyridoxal phosphate</keyword>
<proteinExistence type="inferred from homology"/>
<accession>Q0BJI1</accession>
<name>GCSP_BURCM</name>
<comment type="function">
    <text evidence="1">The glycine cleavage system catalyzes the degradation of glycine. The P protein binds the alpha-amino group of glycine through its pyridoxal phosphate cofactor; CO(2) is released and the remaining methylamine moiety is then transferred to the lipoamide cofactor of the H protein.</text>
</comment>
<comment type="catalytic activity">
    <reaction evidence="1">
        <text>N(6)-[(R)-lipoyl]-L-lysyl-[glycine-cleavage complex H protein] + glycine + H(+) = N(6)-[(R)-S(8)-aminomethyldihydrolipoyl]-L-lysyl-[glycine-cleavage complex H protein] + CO2</text>
        <dbReference type="Rhea" id="RHEA:24304"/>
        <dbReference type="Rhea" id="RHEA-COMP:10494"/>
        <dbReference type="Rhea" id="RHEA-COMP:10495"/>
        <dbReference type="ChEBI" id="CHEBI:15378"/>
        <dbReference type="ChEBI" id="CHEBI:16526"/>
        <dbReference type="ChEBI" id="CHEBI:57305"/>
        <dbReference type="ChEBI" id="CHEBI:83099"/>
        <dbReference type="ChEBI" id="CHEBI:83143"/>
        <dbReference type="EC" id="1.4.4.2"/>
    </reaction>
</comment>
<comment type="cofactor">
    <cofactor evidence="1">
        <name>pyridoxal 5'-phosphate</name>
        <dbReference type="ChEBI" id="CHEBI:597326"/>
    </cofactor>
</comment>
<comment type="subunit">
    <text evidence="1">The glycine cleavage system is composed of four proteins: P, T, L and H.</text>
</comment>
<comment type="similarity">
    <text evidence="1">Belongs to the GcvP family.</text>
</comment>
<dbReference type="EC" id="1.4.4.2" evidence="1"/>
<dbReference type="EMBL" id="CP000440">
    <property type="protein sequence ID" value="ABI85692.1"/>
    <property type="molecule type" value="Genomic_DNA"/>
</dbReference>
<dbReference type="RefSeq" id="WP_011655652.1">
    <property type="nucleotide sequence ID" value="NC_008390.1"/>
</dbReference>
<dbReference type="SMR" id="Q0BJI1"/>
<dbReference type="GeneID" id="93084461"/>
<dbReference type="KEGG" id="bam:Bamb_0131"/>
<dbReference type="PATRIC" id="fig|339670.21.peg.1501"/>
<dbReference type="eggNOG" id="COG0403">
    <property type="taxonomic scope" value="Bacteria"/>
</dbReference>
<dbReference type="eggNOG" id="COG1003">
    <property type="taxonomic scope" value="Bacteria"/>
</dbReference>
<dbReference type="Proteomes" id="UP000000662">
    <property type="component" value="Chromosome 1"/>
</dbReference>
<dbReference type="GO" id="GO:0005829">
    <property type="term" value="C:cytosol"/>
    <property type="evidence" value="ECO:0007669"/>
    <property type="project" value="TreeGrafter"/>
</dbReference>
<dbReference type="GO" id="GO:0005960">
    <property type="term" value="C:glycine cleavage complex"/>
    <property type="evidence" value="ECO:0007669"/>
    <property type="project" value="TreeGrafter"/>
</dbReference>
<dbReference type="GO" id="GO:0016594">
    <property type="term" value="F:glycine binding"/>
    <property type="evidence" value="ECO:0007669"/>
    <property type="project" value="TreeGrafter"/>
</dbReference>
<dbReference type="GO" id="GO:0004375">
    <property type="term" value="F:glycine dehydrogenase (decarboxylating) activity"/>
    <property type="evidence" value="ECO:0007669"/>
    <property type="project" value="UniProtKB-EC"/>
</dbReference>
<dbReference type="GO" id="GO:0030170">
    <property type="term" value="F:pyridoxal phosphate binding"/>
    <property type="evidence" value="ECO:0007669"/>
    <property type="project" value="TreeGrafter"/>
</dbReference>
<dbReference type="GO" id="GO:0019464">
    <property type="term" value="P:glycine decarboxylation via glycine cleavage system"/>
    <property type="evidence" value="ECO:0007669"/>
    <property type="project" value="UniProtKB-UniRule"/>
</dbReference>
<dbReference type="CDD" id="cd00613">
    <property type="entry name" value="GDC-P"/>
    <property type="match status" value="2"/>
</dbReference>
<dbReference type="FunFam" id="3.40.640.10:FF:000005">
    <property type="entry name" value="Glycine dehydrogenase (decarboxylating), mitochondrial"/>
    <property type="match status" value="1"/>
</dbReference>
<dbReference type="FunFam" id="3.90.1150.10:FF:000007">
    <property type="entry name" value="Glycine dehydrogenase (decarboxylating), mitochondrial"/>
    <property type="match status" value="1"/>
</dbReference>
<dbReference type="FunFam" id="3.40.640.10:FF:000007">
    <property type="entry name" value="glycine dehydrogenase (Decarboxylating), mitochondrial"/>
    <property type="match status" value="1"/>
</dbReference>
<dbReference type="Gene3D" id="3.90.1150.10">
    <property type="entry name" value="Aspartate Aminotransferase, domain 1"/>
    <property type="match status" value="2"/>
</dbReference>
<dbReference type="Gene3D" id="3.40.640.10">
    <property type="entry name" value="Type I PLP-dependent aspartate aminotransferase-like (Major domain)"/>
    <property type="match status" value="2"/>
</dbReference>
<dbReference type="HAMAP" id="MF_00711">
    <property type="entry name" value="GcvP"/>
    <property type="match status" value="1"/>
</dbReference>
<dbReference type="InterPro" id="IPR003437">
    <property type="entry name" value="GcvP"/>
</dbReference>
<dbReference type="InterPro" id="IPR049316">
    <property type="entry name" value="GDC-P_C"/>
</dbReference>
<dbReference type="InterPro" id="IPR049315">
    <property type="entry name" value="GDC-P_N"/>
</dbReference>
<dbReference type="InterPro" id="IPR020581">
    <property type="entry name" value="GDC_P"/>
</dbReference>
<dbReference type="InterPro" id="IPR015424">
    <property type="entry name" value="PyrdxlP-dep_Trfase"/>
</dbReference>
<dbReference type="InterPro" id="IPR015421">
    <property type="entry name" value="PyrdxlP-dep_Trfase_major"/>
</dbReference>
<dbReference type="InterPro" id="IPR015422">
    <property type="entry name" value="PyrdxlP-dep_Trfase_small"/>
</dbReference>
<dbReference type="NCBIfam" id="TIGR00461">
    <property type="entry name" value="gcvP"/>
    <property type="match status" value="1"/>
</dbReference>
<dbReference type="NCBIfam" id="NF003346">
    <property type="entry name" value="PRK04366.1"/>
    <property type="match status" value="1"/>
</dbReference>
<dbReference type="PANTHER" id="PTHR11773:SF1">
    <property type="entry name" value="GLYCINE DEHYDROGENASE (DECARBOXYLATING), MITOCHONDRIAL"/>
    <property type="match status" value="1"/>
</dbReference>
<dbReference type="PANTHER" id="PTHR11773">
    <property type="entry name" value="GLYCINE DEHYDROGENASE, DECARBOXYLATING"/>
    <property type="match status" value="1"/>
</dbReference>
<dbReference type="Pfam" id="PF21478">
    <property type="entry name" value="GcvP2_C"/>
    <property type="match status" value="1"/>
</dbReference>
<dbReference type="Pfam" id="PF02347">
    <property type="entry name" value="GDC-P"/>
    <property type="match status" value="2"/>
</dbReference>
<dbReference type="SUPFAM" id="SSF53383">
    <property type="entry name" value="PLP-dependent transferases"/>
    <property type="match status" value="2"/>
</dbReference>
<evidence type="ECO:0000255" key="1">
    <source>
        <dbReference type="HAMAP-Rule" id="MF_00711"/>
    </source>
</evidence>
<reference key="1">
    <citation type="submission" date="2006-08" db="EMBL/GenBank/DDBJ databases">
        <title>Complete sequence of chromosome 1 of Burkholderia cepacia AMMD.</title>
        <authorList>
            <person name="Copeland A."/>
            <person name="Lucas S."/>
            <person name="Lapidus A."/>
            <person name="Barry K."/>
            <person name="Detter J.C."/>
            <person name="Glavina del Rio T."/>
            <person name="Hammon N."/>
            <person name="Israni S."/>
            <person name="Pitluck S."/>
            <person name="Bruce D."/>
            <person name="Chain P."/>
            <person name="Malfatti S."/>
            <person name="Shin M."/>
            <person name="Vergez L."/>
            <person name="Schmutz J."/>
            <person name="Larimer F."/>
            <person name="Land M."/>
            <person name="Hauser L."/>
            <person name="Kyrpides N."/>
            <person name="Kim E."/>
            <person name="Parke J."/>
            <person name="Coenye T."/>
            <person name="Konstantinidis K."/>
            <person name="Ramette A."/>
            <person name="Tiedje J."/>
            <person name="Richardson P."/>
        </authorList>
    </citation>
    <scope>NUCLEOTIDE SEQUENCE [LARGE SCALE GENOMIC DNA]</scope>
    <source>
        <strain>ATCC BAA-244 / DSM 16087 / CCUG 44356 / LMG 19182 / AMMD</strain>
    </source>
</reference>